<dbReference type="EMBL" id="BA000016">
    <property type="protein sequence ID" value="BAB81455.1"/>
    <property type="molecule type" value="Genomic_DNA"/>
</dbReference>
<dbReference type="SMR" id="Q8XJK7"/>
<dbReference type="STRING" id="195102.gene:10491013"/>
<dbReference type="KEGG" id="cpe:CPE1749"/>
<dbReference type="HOGENOM" id="CLU_165326_0_0_9"/>
<dbReference type="Proteomes" id="UP000000818">
    <property type="component" value="Chromosome"/>
</dbReference>
<dbReference type="HAMAP" id="MF_01503">
    <property type="entry name" value="RemA"/>
    <property type="match status" value="1"/>
</dbReference>
<dbReference type="InterPro" id="IPR007169">
    <property type="entry name" value="RemA-like"/>
</dbReference>
<dbReference type="NCBIfam" id="NF046064">
    <property type="entry name" value="MtxBflmRegRemA"/>
    <property type="match status" value="1"/>
</dbReference>
<dbReference type="NCBIfam" id="NF003315">
    <property type="entry name" value="PRK04323.1"/>
    <property type="match status" value="1"/>
</dbReference>
<dbReference type="PANTHER" id="PTHR38449:SF1">
    <property type="entry name" value="REGULATORY PROTEIN SSL2874-RELATED"/>
    <property type="match status" value="1"/>
</dbReference>
<dbReference type="PANTHER" id="PTHR38449">
    <property type="entry name" value="REGULATORY PROTEIN TM_1690-RELATED"/>
    <property type="match status" value="1"/>
</dbReference>
<dbReference type="Pfam" id="PF04025">
    <property type="entry name" value="RemA-like"/>
    <property type="match status" value="1"/>
</dbReference>
<evidence type="ECO:0000255" key="1">
    <source>
        <dbReference type="HAMAP-Rule" id="MF_01503"/>
    </source>
</evidence>
<name>Y1749_CLOPE</name>
<proteinExistence type="inferred from homology"/>
<reference key="1">
    <citation type="journal article" date="2002" name="Proc. Natl. Acad. Sci. U.S.A.">
        <title>Complete genome sequence of Clostridium perfringens, an anaerobic flesh-eater.</title>
        <authorList>
            <person name="Shimizu T."/>
            <person name="Ohtani K."/>
            <person name="Hirakawa H."/>
            <person name="Ohshima K."/>
            <person name="Yamashita A."/>
            <person name="Shiba T."/>
            <person name="Ogasawara N."/>
            <person name="Hattori M."/>
            <person name="Kuhara S."/>
            <person name="Hayashi H."/>
        </authorList>
    </citation>
    <scope>NUCLEOTIDE SEQUENCE [LARGE SCALE GENOMIC DNA]</scope>
    <source>
        <strain>13 / Type A</strain>
    </source>
</reference>
<keyword id="KW-1185">Reference proteome</keyword>
<feature type="chain" id="PRO_0000050226" description="Putative regulatory protein CPE1749">
    <location>
        <begin position="1"/>
        <end position="89"/>
    </location>
</feature>
<organism>
    <name type="scientific">Clostridium perfringens (strain 13 / Type A)</name>
    <dbReference type="NCBI Taxonomy" id="195102"/>
    <lineage>
        <taxon>Bacteria</taxon>
        <taxon>Bacillati</taxon>
        <taxon>Bacillota</taxon>
        <taxon>Clostridia</taxon>
        <taxon>Eubacteriales</taxon>
        <taxon>Clostridiaceae</taxon>
        <taxon>Clostridium</taxon>
    </lineage>
</organism>
<comment type="similarity">
    <text evidence="1">Belongs to the RemA family.</text>
</comment>
<protein>
    <recommendedName>
        <fullName evidence="1">Putative regulatory protein CPE1749</fullName>
    </recommendedName>
</protein>
<sequence>MSIKLINIGFGNIVSANRLVAIVSPESAPIKRIIQEARDRGMLIDATYGRRTRAVIITDSDHVILSAVQPETVAHRLSTKEEVVVEDDE</sequence>
<accession>Q8XJK7</accession>
<gene>
    <name type="ordered locus">CPE1749</name>
</gene>